<reference key="1">
    <citation type="journal article" date="2005" name="J. Bacteriol.">
        <title>Insights into genome plasticity and pathogenicity of the plant pathogenic Bacterium Xanthomonas campestris pv. vesicatoria revealed by the complete genome sequence.</title>
        <authorList>
            <person name="Thieme F."/>
            <person name="Koebnik R."/>
            <person name="Bekel T."/>
            <person name="Berger C."/>
            <person name="Boch J."/>
            <person name="Buettner D."/>
            <person name="Caldana C."/>
            <person name="Gaigalat L."/>
            <person name="Goesmann A."/>
            <person name="Kay S."/>
            <person name="Kirchner O."/>
            <person name="Lanz C."/>
            <person name="Linke B."/>
            <person name="McHardy A.C."/>
            <person name="Meyer F."/>
            <person name="Mittenhuber G."/>
            <person name="Nies D.H."/>
            <person name="Niesbach-Kloesgen U."/>
            <person name="Patschkowski T."/>
            <person name="Rueckert C."/>
            <person name="Rupp O."/>
            <person name="Schneiker S."/>
            <person name="Schuster S.C."/>
            <person name="Vorhoelter F.J."/>
            <person name="Weber E."/>
            <person name="Puehler A."/>
            <person name="Bonas U."/>
            <person name="Bartels D."/>
            <person name="Kaiser O."/>
        </authorList>
    </citation>
    <scope>NUCLEOTIDE SEQUENCE [LARGE SCALE GENOMIC DNA]</scope>
    <source>
        <strain>85-10</strain>
    </source>
</reference>
<keyword id="KW-0687">Ribonucleoprotein</keyword>
<keyword id="KW-0689">Ribosomal protein</keyword>
<dbReference type="EMBL" id="AM039952">
    <property type="protein sequence ID" value="CAJ22621.1"/>
    <property type="molecule type" value="Genomic_DNA"/>
</dbReference>
<dbReference type="RefSeq" id="WP_008574194.1">
    <property type="nucleotide sequence ID" value="NZ_CP017190.1"/>
</dbReference>
<dbReference type="SMR" id="Q3BWZ2"/>
<dbReference type="STRING" id="456327.BJD11_17785"/>
<dbReference type="GeneID" id="97509327"/>
<dbReference type="KEGG" id="xcv:XCV0990"/>
<dbReference type="eggNOG" id="COG0222">
    <property type="taxonomic scope" value="Bacteria"/>
</dbReference>
<dbReference type="HOGENOM" id="CLU_086499_3_2_6"/>
<dbReference type="Proteomes" id="UP000007069">
    <property type="component" value="Chromosome"/>
</dbReference>
<dbReference type="GO" id="GO:0022625">
    <property type="term" value="C:cytosolic large ribosomal subunit"/>
    <property type="evidence" value="ECO:0007669"/>
    <property type="project" value="TreeGrafter"/>
</dbReference>
<dbReference type="GO" id="GO:0003729">
    <property type="term" value="F:mRNA binding"/>
    <property type="evidence" value="ECO:0007669"/>
    <property type="project" value="TreeGrafter"/>
</dbReference>
<dbReference type="GO" id="GO:0003735">
    <property type="term" value="F:structural constituent of ribosome"/>
    <property type="evidence" value="ECO:0007669"/>
    <property type="project" value="InterPro"/>
</dbReference>
<dbReference type="GO" id="GO:0006412">
    <property type="term" value="P:translation"/>
    <property type="evidence" value="ECO:0007669"/>
    <property type="project" value="UniProtKB-UniRule"/>
</dbReference>
<dbReference type="CDD" id="cd00387">
    <property type="entry name" value="Ribosomal_L7_L12"/>
    <property type="match status" value="1"/>
</dbReference>
<dbReference type="FunFam" id="1.20.5.710:FF:000003">
    <property type="entry name" value="50S ribosomal protein L7/L12"/>
    <property type="match status" value="1"/>
</dbReference>
<dbReference type="FunFam" id="3.30.1390.10:FF:000001">
    <property type="entry name" value="50S ribosomal protein L7/L12"/>
    <property type="match status" value="1"/>
</dbReference>
<dbReference type="Gene3D" id="3.30.1390.10">
    <property type="match status" value="1"/>
</dbReference>
<dbReference type="Gene3D" id="1.20.5.710">
    <property type="entry name" value="Single helix bin"/>
    <property type="match status" value="1"/>
</dbReference>
<dbReference type="HAMAP" id="MF_00368">
    <property type="entry name" value="Ribosomal_bL12"/>
    <property type="match status" value="1"/>
</dbReference>
<dbReference type="InterPro" id="IPR000206">
    <property type="entry name" value="Ribosomal_bL12"/>
</dbReference>
<dbReference type="InterPro" id="IPR013823">
    <property type="entry name" value="Ribosomal_bL12_C"/>
</dbReference>
<dbReference type="InterPro" id="IPR014719">
    <property type="entry name" value="Ribosomal_bL12_C/ClpS-like"/>
</dbReference>
<dbReference type="InterPro" id="IPR008932">
    <property type="entry name" value="Ribosomal_bL12_oligo"/>
</dbReference>
<dbReference type="InterPro" id="IPR036235">
    <property type="entry name" value="Ribosomal_bL12_oligo_N_sf"/>
</dbReference>
<dbReference type="NCBIfam" id="TIGR00855">
    <property type="entry name" value="L12"/>
    <property type="match status" value="1"/>
</dbReference>
<dbReference type="PANTHER" id="PTHR45987">
    <property type="entry name" value="39S RIBOSOMAL PROTEIN L12"/>
    <property type="match status" value="1"/>
</dbReference>
<dbReference type="PANTHER" id="PTHR45987:SF4">
    <property type="entry name" value="LARGE RIBOSOMAL SUBUNIT PROTEIN BL12M"/>
    <property type="match status" value="1"/>
</dbReference>
<dbReference type="Pfam" id="PF00542">
    <property type="entry name" value="Ribosomal_L12"/>
    <property type="match status" value="1"/>
</dbReference>
<dbReference type="Pfam" id="PF16320">
    <property type="entry name" value="Ribosomal_L12_N"/>
    <property type="match status" value="1"/>
</dbReference>
<dbReference type="SUPFAM" id="SSF54736">
    <property type="entry name" value="ClpS-like"/>
    <property type="match status" value="1"/>
</dbReference>
<dbReference type="SUPFAM" id="SSF48300">
    <property type="entry name" value="Ribosomal protein L7/12, oligomerisation (N-terminal) domain"/>
    <property type="match status" value="1"/>
</dbReference>
<gene>
    <name evidence="1" type="primary">rplL</name>
    <name type="ordered locus">XCV0990</name>
</gene>
<protein>
    <recommendedName>
        <fullName evidence="1">Large ribosomal subunit protein bL12</fullName>
    </recommendedName>
    <alternativeName>
        <fullName evidence="2">50S ribosomal protein L7/L12</fullName>
    </alternativeName>
</protein>
<sequence>MSLTNEQIVDAIAEKSLMEVMELVKAIEEKFGVSAAAPVAAAAAGPAAVVEEQTEFNVVLTNCGANKVGVIKAVRAVTGLGLKEAKDLTEAGGMLKEGASKDEAEKIKKELTEAGATVEIK</sequence>
<comment type="function">
    <text evidence="1">Forms part of the ribosomal stalk which helps the ribosome interact with GTP-bound translation factors. Is thus essential for accurate translation.</text>
</comment>
<comment type="subunit">
    <text evidence="1">Homodimer. Part of the ribosomal stalk of the 50S ribosomal subunit. Forms a multimeric L10(L12)X complex, where L10 forms an elongated spine to which 2 to 4 L12 dimers bind in a sequential fashion. Binds GTP-bound translation factors.</text>
</comment>
<comment type="similarity">
    <text evidence="1">Belongs to the bacterial ribosomal protein bL12 family.</text>
</comment>
<name>RL7_XANE5</name>
<organism>
    <name type="scientific">Xanthomonas euvesicatoria pv. vesicatoria (strain 85-10)</name>
    <name type="common">Xanthomonas campestris pv. vesicatoria</name>
    <dbReference type="NCBI Taxonomy" id="316273"/>
    <lineage>
        <taxon>Bacteria</taxon>
        <taxon>Pseudomonadati</taxon>
        <taxon>Pseudomonadota</taxon>
        <taxon>Gammaproteobacteria</taxon>
        <taxon>Lysobacterales</taxon>
        <taxon>Lysobacteraceae</taxon>
        <taxon>Xanthomonas</taxon>
    </lineage>
</organism>
<proteinExistence type="inferred from homology"/>
<feature type="chain" id="PRO_0000243528" description="Large ribosomal subunit protein bL12">
    <location>
        <begin position="1"/>
        <end position="121"/>
    </location>
</feature>
<accession>Q3BWZ2</accession>
<evidence type="ECO:0000255" key="1">
    <source>
        <dbReference type="HAMAP-Rule" id="MF_00368"/>
    </source>
</evidence>
<evidence type="ECO:0000305" key="2"/>